<organism>
    <name type="scientific">Lactiplantibacillus plantarum (strain ATCC BAA-793 / NCIMB 8826 / WCFS1)</name>
    <name type="common">Lactobacillus plantarum</name>
    <dbReference type="NCBI Taxonomy" id="220668"/>
    <lineage>
        <taxon>Bacteria</taxon>
        <taxon>Bacillati</taxon>
        <taxon>Bacillota</taxon>
        <taxon>Bacilli</taxon>
        <taxon>Lactobacillales</taxon>
        <taxon>Lactobacillaceae</taxon>
        <taxon>Lactiplantibacillus</taxon>
    </lineage>
</organism>
<proteinExistence type="inferred from homology"/>
<evidence type="ECO:0000255" key="1">
    <source>
        <dbReference type="HAMAP-Rule" id="MF_00050"/>
    </source>
</evidence>
<protein>
    <recommendedName>
        <fullName evidence="1">Elongation factor Ts</fullName>
        <shortName evidence="1">EF-Ts</shortName>
    </recommendedName>
</protein>
<name>EFTS_LACPL</name>
<keyword id="KW-0963">Cytoplasm</keyword>
<keyword id="KW-0251">Elongation factor</keyword>
<keyword id="KW-0648">Protein biosynthesis</keyword>
<keyword id="KW-1185">Reference proteome</keyword>
<gene>
    <name evidence="1" type="primary">tsf</name>
    <name type="ordered locus">lp_2054</name>
</gene>
<reference key="1">
    <citation type="journal article" date="2003" name="Proc. Natl. Acad. Sci. U.S.A.">
        <title>Complete genome sequence of Lactobacillus plantarum WCFS1.</title>
        <authorList>
            <person name="Kleerebezem M."/>
            <person name="Boekhorst J."/>
            <person name="van Kranenburg R."/>
            <person name="Molenaar D."/>
            <person name="Kuipers O.P."/>
            <person name="Leer R."/>
            <person name="Tarchini R."/>
            <person name="Peters S.A."/>
            <person name="Sandbrink H.M."/>
            <person name="Fiers M.W.E.J."/>
            <person name="Stiekema W."/>
            <person name="Klein Lankhorst R.M."/>
            <person name="Bron P.A."/>
            <person name="Hoffer S.M."/>
            <person name="Nierop Groot M.N."/>
            <person name="Kerkhoven R."/>
            <person name="De Vries M."/>
            <person name="Ursing B."/>
            <person name="De Vos W.M."/>
            <person name="Siezen R.J."/>
        </authorList>
    </citation>
    <scope>NUCLEOTIDE SEQUENCE [LARGE SCALE GENOMIC DNA]</scope>
    <source>
        <strain>ATCC BAA-793 / NCIMB 8826 / WCFS1</strain>
    </source>
</reference>
<reference key="2">
    <citation type="journal article" date="2012" name="J. Bacteriol.">
        <title>Complete resequencing and reannotation of the Lactobacillus plantarum WCFS1 genome.</title>
        <authorList>
            <person name="Siezen R.J."/>
            <person name="Francke C."/>
            <person name="Renckens B."/>
            <person name="Boekhorst J."/>
            <person name="Wels M."/>
            <person name="Kleerebezem M."/>
            <person name="van Hijum S.A."/>
        </authorList>
    </citation>
    <scope>NUCLEOTIDE SEQUENCE [LARGE SCALE GENOMIC DNA]</scope>
    <scope>GENOME REANNOTATION</scope>
    <source>
        <strain>ATCC BAA-793 / NCIMB 8826 / WCFS1</strain>
    </source>
</reference>
<dbReference type="EMBL" id="AL935263">
    <property type="protein sequence ID" value="CCC79298.1"/>
    <property type="molecule type" value="Genomic_DNA"/>
</dbReference>
<dbReference type="RefSeq" id="WP_003644498.1">
    <property type="nucleotide sequence ID" value="NC_004567.2"/>
</dbReference>
<dbReference type="RefSeq" id="YP_004889812.1">
    <property type="nucleotide sequence ID" value="NC_004567.2"/>
</dbReference>
<dbReference type="SMR" id="Q88VJ5"/>
<dbReference type="STRING" id="220668.lp_2054"/>
<dbReference type="EnsemblBacteria" id="CCC79298">
    <property type="protein sequence ID" value="CCC79298"/>
    <property type="gene ID" value="lp_2054"/>
</dbReference>
<dbReference type="GeneID" id="89669335"/>
<dbReference type="KEGG" id="lpl:lp_2054"/>
<dbReference type="PATRIC" id="fig|220668.9.peg.1739"/>
<dbReference type="eggNOG" id="COG0264">
    <property type="taxonomic scope" value="Bacteria"/>
</dbReference>
<dbReference type="HOGENOM" id="CLU_047155_0_2_9"/>
<dbReference type="OrthoDB" id="9808348at2"/>
<dbReference type="PhylomeDB" id="Q88VJ5"/>
<dbReference type="Proteomes" id="UP000000432">
    <property type="component" value="Chromosome"/>
</dbReference>
<dbReference type="GO" id="GO:0005737">
    <property type="term" value="C:cytoplasm"/>
    <property type="evidence" value="ECO:0007669"/>
    <property type="project" value="UniProtKB-SubCell"/>
</dbReference>
<dbReference type="GO" id="GO:0003746">
    <property type="term" value="F:translation elongation factor activity"/>
    <property type="evidence" value="ECO:0007669"/>
    <property type="project" value="UniProtKB-UniRule"/>
</dbReference>
<dbReference type="CDD" id="cd14275">
    <property type="entry name" value="UBA_EF-Ts"/>
    <property type="match status" value="1"/>
</dbReference>
<dbReference type="FunFam" id="1.10.286.20:FF:000001">
    <property type="entry name" value="Elongation factor Ts"/>
    <property type="match status" value="1"/>
</dbReference>
<dbReference type="FunFam" id="1.10.8.10:FF:000001">
    <property type="entry name" value="Elongation factor Ts"/>
    <property type="match status" value="1"/>
</dbReference>
<dbReference type="Gene3D" id="1.10.286.20">
    <property type="match status" value="1"/>
</dbReference>
<dbReference type="Gene3D" id="1.10.8.10">
    <property type="entry name" value="DNA helicase RuvA subunit, C-terminal domain"/>
    <property type="match status" value="1"/>
</dbReference>
<dbReference type="Gene3D" id="3.30.479.20">
    <property type="entry name" value="Elongation factor Ts, dimerisation domain"/>
    <property type="match status" value="2"/>
</dbReference>
<dbReference type="HAMAP" id="MF_00050">
    <property type="entry name" value="EF_Ts"/>
    <property type="match status" value="1"/>
</dbReference>
<dbReference type="InterPro" id="IPR036402">
    <property type="entry name" value="EF-Ts_dimer_sf"/>
</dbReference>
<dbReference type="InterPro" id="IPR001816">
    <property type="entry name" value="Transl_elong_EFTs/EF1B"/>
</dbReference>
<dbReference type="InterPro" id="IPR014039">
    <property type="entry name" value="Transl_elong_EFTs/EF1B_dimer"/>
</dbReference>
<dbReference type="InterPro" id="IPR018101">
    <property type="entry name" value="Transl_elong_Ts_CS"/>
</dbReference>
<dbReference type="InterPro" id="IPR009060">
    <property type="entry name" value="UBA-like_sf"/>
</dbReference>
<dbReference type="NCBIfam" id="TIGR00116">
    <property type="entry name" value="tsf"/>
    <property type="match status" value="1"/>
</dbReference>
<dbReference type="PANTHER" id="PTHR11741">
    <property type="entry name" value="ELONGATION FACTOR TS"/>
    <property type="match status" value="1"/>
</dbReference>
<dbReference type="PANTHER" id="PTHR11741:SF0">
    <property type="entry name" value="ELONGATION FACTOR TS, MITOCHONDRIAL"/>
    <property type="match status" value="1"/>
</dbReference>
<dbReference type="Pfam" id="PF00889">
    <property type="entry name" value="EF_TS"/>
    <property type="match status" value="1"/>
</dbReference>
<dbReference type="SUPFAM" id="SSF54713">
    <property type="entry name" value="Elongation factor Ts (EF-Ts), dimerisation domain"/>
    <property type="match status" value="2"/>
</dbReference>
<dbReference type="SUPFAM" id="SSF46934">
    <property type="entry name" value="UBA-like"/>
    <property type="match status" value="1"/>
</dbReference>
<dbReference type="PROSITE" id="PS01126">
    <property type="entry name" value="EF_TS_1"/>
    <property type="match status" value="1"/>
</dbReference>
<dbReference type="PROSITE" id="PS01127">
    <property type="entry name" value="EF_TS_2"/>
    <property type="match status" value="1"/>
</dbReference>
<sequence>MAKISAAQVKELRDKTGVGMMDAKKALVETEGDMEKAVDVLREKGVAKAEKKSGRVAAEGIAAVAIKDNKAAIVEINCETDSVASTDKFKNLVTEVADKIAEEEPASVDDALALKTANGTVKDDVIETTQVTGEKISLRRFQVVEKGADQSFGSYIHNGGQIAALVVLDGADSATAKDVAMHVAAINPEYVNREQVPADRLAHEKDVLVKEALNEGKPEKIVEKMVEGRLNKWLSEISLDDQEFVKDSDQTVAHFVESKGGKVSSFIRFEVGEGIEKKADNFIDEVMNQIKD</sequence>
<comment type="function">
    <text evidence="1">Associates with the EF-Tu.GDP complex and induces the exchange of GDP to GTP. It remains bound to the aminoacyl-tRNA.EF-Tu.GTP complex up to the GTP hydrolysis stage on the ribosome.</text>
</comment>
<comment type="subcellular location">
    <subcellularLocation>
        <location evidence="1">Cytoplasm</location>
    </subcellularLocation>
</comment>
<comment type="similarity">
    <text evidence="1">Belongs to the EF-Ts family.</text>
</comment>
<accession>Q88VJ5</accession>
<accession>F9UQ09</accession>
<feature type="chain" id="PRO_0000161136" description="Elongation factor Ts">
    <location>
        <begin position="1"/>
        <end position="292"/>
    </location>
</feature>
<feature type="region of interest" description="Involved in Mg(2+) ion dislocation from EF-Tu" evidence="1">
    <location>
        <begin position="80"/>
        <end position="83"/>
    </location>
</feature>